<name>DTWD1_MOUSE</name>
<accession>Q9D8U7</accession>
<protein>
    <recommendedName>
        <fullName evidence="3">tRNA-uridine aminocarboxypropyltransferase 1</fullName>
        <ecNumber evidence="1">2.5.1.25</ecNumber>
    </recommendedName>
    <alternativeName>
        <fullName evidence="3">DTW domain-containing protein 1</fullName>
    </alternativeName>
</protein>
<gene>
    <name evidence="4" type="primary">Dtwd1</name>
</gene>
<proteinExistence type="evidence at transcript level"/>
<feature type="chain" id="PRO_0000308213" description="tRNA-uridine aminocarboxypropyltransferase 1">
    <location>
        <begin position="1"/>
        <end position="304"/>
    </location>
</feature>
<feature type="region of interest" description="Disordered" evidence="2">
    <location>
        <begin position="1"/>
        <end position="29"/>
    </location>
</feature>
<feature type="region of interest" description="Disordered" evidence="2">
    <location>
        <begin position="165"/>
        <end position="193"/>
    </location>
</feature>
<feature type="short sequence motif" description="DXTW">
    <location>
        <begin position="206"/>
        <end position="209"/>
    </location>
</feature>
<feature type="compositionally biased region" description="Basic and acidic residues" evidence="2">
    <location>
        <begin position="180"/>
        <end position="193"/>
    </location>
</feature>
<sequence>MALSPSVVPQESKEDNANCVETKPSQTTSIASEDPLQNLCLASQEVLRKAQQSGRSRCRQCGGSRMFYCYTCCVPVGNVPTEQIPCVQLPLKIDIIKHPNETDGKSTAVHAKLLAPDSVNIYTYPCIPEYEGKDHEVVLVFPGPQSISIEDVSFHLQKRIESKGRNKADNLDVPPRKLKRTTDEEGWDLHESTRQGPELKRVVFIDSTWSQTNQIASDERLRELLQVELRTRKTCFWRHQKGKPDTFLSTIEAIYYFLVDYHSAVQKEKYRGQYDNLLFFYSFMYRLIKNARGSGEKAKPQLVQ</sequence>
<dbReference type="EC" id="2.5.1.25" evidence="1"/>
<dbReference type="EMBL" id="AK007678">
    <property type="protein sequence ID" value="BAB25182.1"/>
    <property type="molecule type" value="mRNA"/>
</dbReference>
<dbReference type="EMBL" id="AL929175">
    <property type="status" value="NOT_ANNOTATED_CDS"/>
    <property type="molecule type" value="Genomic_DNA"/>
</dbReference>
<dbReference type="EMBL" id="BC020149">
    <property type="protein sequence ID" value="AAH20149.1"/>
    <property type="molecule type" value="mRNA"/>
</dbReference>
<dbReference type="CCDS" id="CCDS16682.1"/>
<dbReference type="RefSeq" id="NP_001342512.1">
    <property type="nucleotide sequence ID" value="NM_001355583.1"/>
</dbReference>
<dbReference type="RefSeq" id="NP_081257.1">
    <property type="nucleotide sequence ID" value="NM_026981.2"/>
</dbReference>
<dbReference type="RefSeq" id="XP_006500192.1">
    <property type="nucleotide sequence ID" value="XM_006500129.1"/>
</dbReference>
<dbReference type="RefSeq" id="XP_006500193.1">
    <property type="nucleotide sequence ID" value="XM_006500130.3"/>
</dbReference>
<dbReference type="RefSeq" id="XP_006500194.1">
    <property type="nucleotide sequence ID" value="XM_006500131.3"/>
</dbReference>
<dbReference type="FunCoup" id="Q9D8U7">
    <property type="interactions" value="2449"/>
</dbReference>
<dbReference type="STRING" id="10090.ENSMUSP00000127662"/>
<dbReference type="iPTMnet" id="Q9D8U7"/>
<dbReference type="PhosphoSitePlus" id="Q9D8U7"/>
<dbReference type="PaxDb" id="10090-ENSMUSP00000127662"/>
<dbReference type="ProteomicsDB" id="277632"/>
<dbReference type="Pumba" id="Q9D8U7"/>
<dbReference type="Antibodypedia" id="65167">
    <property type="antibodies" value="154 antibodies from 21 providers"/>
</dbReference>
<dbReference type="DNASU" id="69185"/>
<dbReference type="Ensembl" id="ENSMUST00000110437.4">
    <property type="protein sequence ID" value="ENSMUSP00000106067.4"/>
    <property type="gene ID" value="ENSMUSG00000023330.13"/>
</dbReference>
<dbReference type="Ensembl" id="ENSMUST00000170908.8">
    <property type="protein sequence ID" value="ENSMUSP00000127662.2"/>
    <property type="gene ID" value="ENSMUSG00000023330.13"/>
</dbReference>
<dbReference type="GeneID" id="69185"/>
<dbReference type="KEGG" id="mmu:69185"/>
<dbReference type="UCSC" id="uc008mdk.2">
    <property type="organism name" value="mouse"/>
</dbReference>
<dbReference type="AGR" id="MGI:1916435"/>
<dbReference type="CTD" id="56986"/>
<dbReference type="MGI" id="MGI:1916435">
    <property type="gene designation" value="Dtwd1"/>
</dbReference>
<dbReference type="VEuPathDB" id="HostDB:ENSMUSG00000023330"/>
<dbReference type="eggNOG" id="KOG3795">
    <property type="taxonomic scope" value="Eukaryota"/>
</dbReference>
<dbReference type="GeneTree" id="ENSGT00940000153766"/>
<dbReference type="HOGENOM" id="CLU_069451_0_0_1"/>
<dbReference type="InParanoid" id="Q9D8U7"/>
<dbReference type="OMA" id="VNAWGLN"/>
<dbReference type="OrthoDB" id="3173at2759"/>
<dbReference type="PhylomeDB" id="Q9D8U7"/>
<dbReference type="TreeFam" id="TF324733"/>
<dbReference type="BioGRID-ORCS" id="69185">
    <property type="hits" value="1 hit in 77 CRISPR screens"/>
</dbReference>
<dbReference type="PRO" id="PR:Q9D8U7"/>
<dbReference type="Proteomes" id="UP000000589">
    <property type="component" value="Chromosome 2"/>
</dbReference>
<dbReference type="RNAct" id="Q9D8U7">
    <property type="molecule type" value="protein"/>
</dbReference>
<dbReference type="Bgee" id="ENSMUSG00000023330">
    <property type="expression patterns" value="Expressed in spermatocyte and 224 other cell types or tissues"/>
</dbReference>
<dbReference type="GO" id="GO:0005634">
    <property type="term" value="C:nucleus"/>
    <property type="evidence" value="ECO:0000250"/>
    <property type="project" value="UniProtKB"/>
</dbReference>
<dbReference type="GO" id="GO:0016432">
    <property type="term" value="F:tRNA-uridine aminocarboxypropyltransferase activity"/>
    <property type="evidence" value="ECO:0000250"/>
    <property type="project" value="UniProtKB"/>
</dbReference>
<dbReference type="GO" id="GO:0006400">
    <property type="term" value="P:tRNA modification"/>
    <property type="evidence" value="ECO:0000250"/>
    <property type="project" value="UniProtKB"/>
</dbReference>
<dbReference type="InterPro" id="IPR005636">
    <property type="entry name" value="DTW"/>
</dbReference>
<dbReference type="InterPro" id="IPR051521">
    <property type="entry name" value="tRNA_Mod/Golgi_Maint"/>
</dbReference>
<dbReference type="PANTHER" id="PTHR15627">
    <property type="entry name" value="NATURAL KILLER CELL-SPECIFIC ANTIGEN KLIP1"/>
    <property type="match status" value="1"/>
</dbReference>
<dbReference type="PANTHER" id="PTHR15627:SF8">
    <property type="entry name" value="TRNA-URIDINE AMINOCARBOXYPROPYLTRANSFERASE 1"/>
    <property type="match status" value="1"/>
</dbReference>
<dbReference type="Pfam" id="PF03942">
    <property type="entry name" value="DTW"/>
    <property type="match status" value="1"/>
</dbReference>
<dbReference type="SMART" id="SM01144">
    <property type="entry name" value="DTW"/>
    <property type="match status" value="1"/>
</dbReference>
<reference key="1">
    <citation type="journal article" date="2005" name="Science">
        <title>The transcriptional landscape of the mammalian genome.</title>
        <authorList>
            <person name="Carninci P."/>
            <person name="Kasukawa T."/>
            <person name="Katayama S."/>
            <person name="Gough J."/>
            <person name="Frith M.C."/>
            <person name="Maeda N."/>
            <person name="Oyama R."/>
            <person name="Ravasi T."/>
            <person name="Lenhard B."/>
            <person name="Wells C."/>
            <person name="Kodzius R."/>
            <person name="Shimokawa K."/>
            <person name="Bajic V.B."/>
            <person name="Brenner S.E."/>
            <person name="Batalov S."/>
            <person name="Forrest A.R."/>
            <person name="Zavolan M."/>
            <person name="Davis M.J."/>
            <person name="Wilming L.G."/>
            <person name="Aidinis V."/>
            <person name="Allen J.E."/>
            <person name="Ambesi-Impiombato A."/>
            <person name="Apweiler R."/>
            <person name="Aturaliya R.N."/>
            <person name="Bailey T.L."/>
            <person name="Bansal M."/>
            <person name="Baxter L."/>
            <person name="Beisel K.W."/>
            <person name="Bersano T."/>
            <person name="Bono H."/>
            <person name="Chalk A.M."/>
            <person name="Chiu K.P."/>
            <person name="Choudhary V."/>
            <person name="Christoffels A."/>
            <person name="Clutterbuck D.R."/>
            <person name="Crowe M.L."/>
            <person name="Dalla E."/>
            <person name="Dalrymple B.P."/>
            <person name="de Bono B."/>
            <person name="Della Gatta G."/>
            <person name="di Bernardo D."/>
            <person name="Down T."/>
            <person name="Engstrom P."/>
            <person name="Fagiolini M."/>
            <person name="Faulkner G."/>
            <person name="Fletcher C.F."/>
            <person name="Fukushima T."/>
            <person name="Furuno M."/>
            <person name="Futaki S."/>
            <person name="Gariboldi M."/>
            <person name="Georgii-Hemming P."/>
            <person name="Gingeras T.R."/>
            <person name="Gojobori T."/>
            <person name="Green R.E."/>
            <person name="Gustincich S."/>
            <person name="Harbers M."/>
            <person name="Hayashi Y."/>
            <person name="Hensch T.K."/>
            <person name="Hirokawa N."/>
            <person name="Hill D."/>
            <person name="Huminiecki L."/>
            <person name="Iacono M."/>
            <person name="Ikeo K."/>
            <person name="Iwama A."/>
            <person name="Ishikawa T."/>
            <person name="Jakt M."/>
            <person name="Kanapin A."/>
            <person name="Katoh M."/>
            <person name="Kawasawa Y."/>
            <person name="Kelso J."/>
            <person name="Kitamura H."/>
            <person name="Kitano H."/>
            <person name="Kollias G."/>
            <person name="Krishnan S.P."/>
            <person name="Kruger A."/>
            <person name="Kummerfeld S.K."/>
            <person name="Kurochkin I.V."/>
            <person name="Lareau L.F."/>
            <person name="Lazarevic D."/>
            <person name="Lipovich L."/>
            <person name="Liu J."/>
            <person name="Liuni S."/>
            <person name="McWilliam S."/>
            <person name="Madan Babu M."/>
            <person name="Madera M."/>
            <person name="Marchionni L."/>
            <person name="Matsuda H."/>
            <person name="Matsuzawa S."/>
            <person name="Miki H."/>
            <person name="Mignone F."/>
            <person name="Miyake S."/>
            <person name="Morris K."/>
            <person name="Mottagui-Tabar S."/>
            <person name="Mulder N."/>
            <person name="Nakano N."/>
            <person name="Nakauchi H."/>
            <person name="Ng P."/>
            <person name="Nilsson R."/>
            <person name="Nishiguchi S."/>
            <person name="Nishikawa S."/>
            <person name="Nori F."/>
            <person name="Ohara O."/>
            <person name="Okazaki Y."/>
            <person name="Orlando V."/>
            <person name="Pang K.C."/>
            <person name="Pavan W.J."/>
            <person name="Pavesi G."/>
            <person name="Pesole G."/>
            <person name="Petrovsky N."/>
            <person name="Piazza S."/>
            <person name="Reed J."/>
            <person name="Reid J.F."/>
            <person name="Ring B.Z."/>
            <person name="Ringwald M."/>
            <person name="Rost B."/>
            <person name="Ruan Y."/>
            <person name="Salzberg S.L."/>
            <person name="Sandelin A."/>
            <person name="Schneider C."/>
            <person name="Schoenbach C."/>
            <person name="Sekiguchi K."/>
            <person name="Semple C.A."/>
            <person name="Seno S."/>
            <person name="Sessa L."/>
            <person name="Sheng Y."/>
            <person name="Shibata Y."/>
            <person name="Shimada H."/>
            <person name="Shimada K."/>
            <person name="Silva D."/>
            <person name="Sinclair B."/>
            <person name="Sperling S."/>
            <person name="Stupka E."/>
            <person name="Sugiura K."/>
            <person name="Sultana R."/>
            <person name="Takenaka Y."/>
            <person name="Taki K."/>
            <person name="Tammoja K."/>
            <person name="Tan S.L."/>
            <person name="Tang S."/>
            <person name="Taylor M.S."/>
            <person name="Tegner J."/>
            <person name="Teichmann S.A."/>
            <person name="Ueda H.R."/>
            <person name="van Nimwegen E."/>
            <person name="Verardo R."/>
            <person name="Wei C.L."/>
            <person name="Yagi K."/>
            <person name="Yamanishi H."/>
            <person name="Zabarovsky E."/>
            <person name="Zhu S."/>
            <person name="Zimmer A."/>
            <person name="Hide W."/>
            <person name="Bult C."/>
            <person name="Grimmond S.M."/>
            <person name="Teasdale R.D."/>
            <person name="Liu E.T."/>
            <person name="Brusic V."/>
            <person name="Quackenbush J."/>
            <person name="Wahlestedt C."/>
            <person name="Mattick J.S."/>
            <person name="Hume D.A."/>
            <person name="Kai C."/>
            <person name="Sasaki D."/>
            <person name="Tomaru Y."/>
            <person name="Fukuda S."/>
            <person name="Kanamori-Katayama M."/>
            <person name="Suzuki M."/>
            <person name="Aoki J."/>
            <person name="Arakawa T."/>
            <person name="Iida J."/>
            <person name="Imamura K."/>
            <person name="Itoh M."/>
            <person name="Kato T."/>
            <person name="Kawaji H."/>
            <person name="Kawagashira N."/>
            <person name="Kawashima T."/>
            <person name="Kojima M."/>
            <person name="Kondo S."/>
            <person name="Konno H."/>
            <person name="Nakano K."/>
            <person name="Ninomiya N."/>
            <person name="Nishio T."/>
            <person name="Okada M."/>
            <person name="Plessy C."/>
            <person name="Shibata K."/>
            <person name="Shiraki T."/>
            <person name="Suzuki S."/>
            <person name="Tagami M."/>
            <person name="Waki K."/>
            <person name="Watahiki A."/>
            <person name="Okamura-Oho Y."/>
            <person name="Suzuki H."/>
            <person name="Kawai J."/>
            <person name="Hayashizaki Y."/>
        </authorList>
    </citation>
    <scope>NUCLEOTIDE SEQUENCE [LARGE SCALE MRNA]</scope>
    <source>
        <strain>C57BL/6J</strain>
        <tissue>Pancreas</tissue>
    </source>
</reference>
<reference key="2">
    <citation type="journal article" date="2009" name="PLoS Biol.">
        <title>Lineage-specific biology revealed by a finished genome assembly of the mouse.</title>
        <authorList>
            <person name="Church D.M."/>
            <person name="Goodstadt L."/>
            <person name="Hillier L.W."/>
            <person name="Zody M.C."/>
            <person name="Goldstein S."/>
            <person name="She X."/>
            <person name="Bult C.J."/>
            <person name="Agarwala R."/>
            <person name="Cherry J.L."/>
            <person name="DiCuccio M."/>
            <person name="Hlavina W."/>
            <person name="Kapustin Y."/>
            <person name="Meric P."/>
            <person name="Maglott D."/>
            <person name="Birtle Z."/>
            <person name="Marques A.C."/>
            <person name="Graves T."/>
            <person name="Zhou S."/>
            <person name="Teague B."/>
            <person name="Potamousis K."/>
            <person name="Churas C."/>
            <person name="Place M."/>
            <person name="Herschleb J."/>
            <person name="Runnheim R."/>
            <person name="Forrest D."/>
            <person name="Amos-Landgraf J."/>
            <person name="Schwartz D.C."/>
            <person name="Cheng Z."/>
            <person name="Lindblad-Toh K."/>
            <person name="Eichler E.E."/>
            <person name="Ponting C.P."/>
        </authorList>
    </citation>
    <scope>NUCLEOTIDE SEQUENCE [LARGE SCALE GENOMIC DNA]</scope>
    <source>
        <strain>C57BL/6J</strain>
    </source>
</reference>
<reference key="3">
    <citation type="journal article" date="2004" name="Genome Res.">
        <title>The status, quality, and expansion of the NIH full-length cDNA project: the Mammalian Gene Collection (MGC).</title>
        <authorList>
            <consortium name="The MGC Project Team"/>
        </authorList>
    </citation>
    <scope>NUCLEOTIDE SEQUENCE [LARGE SCALE MRNA]</scope>
    <source>
        <tissue>Mammary tumor</tissue>
    </source>
</reference>
<organism>
    <name type="scientific">Mus musculus</name>
    <name type="common">Mouse</name>
    <dbReference type="NCBI Taxonomy" id="10090"/>
    <lineage>
        <taxon>Eukaryota</taxon>
        <taxon>Metazoa</taxon>
        <taxon>Chordata</taxon>
        <taxon>Craniata</taxon>
        <taxon>Vertebrata</taxon>
        <taxon>Euteleostomi</taxon>
        <taxon>Mammalia</taxon>
        <taxon>Eutheria</taxon>
        <taxon>Euarchontoglires</taxon>
        <taxon>Glires</taxon>
        <taxon>Rodentia</taxon>
        <taxon>Myomorpha</taxon>
        <taxon>Muroidea</taxon>
        <taxon>Muridae</taxon>
        <taxon>Murinae</taxon>
        <taxon>Mus</taxon>
        <taxon>Mus</taxon>
    </lineage>
</organism>
<evidence type="ECO:0000250" key="1">
    <source>
        <dbReference type="UniProtKB" id="Q8N5C7"/>
    </source>
</evidence>
<evidence type="ECO:0000256" key="2">
    <source>
        <dbReference type="SAM" id="MobiDB-lite"/>
    </source>
</evidence>
<evidence type="ECO:0000305" key="3"/>
<evidence type="ECO:0000312" key="4">
    <source>
        <dbReference type="MGI" id="MGI:1916435"/>
    </source>
</evidence>
<comment type="function">
    <text evidence="1">Catalyzes the formation of 3-(3-amino-3-carboxypropyl)uridine (acp3U) at position 20 in the D-loop of several cytoplasmic tRNAs (acp3U(20)).</text>
</comment>
<comment type="catalytic activity">
    <reaction evidence="1">
        <text>a uridine in tRNA + S-adenosyl-L-methionine = a 3-[(3S)-3-amino-3-carboxypropyl]uridine in tRNA + S-methyl-5'-thioadenosine + H(+)</text>
        <dbReference type="Rhea" id="RHEA:62432"/>
        <dbReference type="Rhea" id="RHEA-COMP:13339"/>
        <dbReference type="Rhea" id="RHEA-COMP:16092"/>
        <dbReference type="ChEBI" id="CHEBI:15378"/>
        <dbReference type="ChEBI" id="CHEBI:17509"/>
        <dbReference type="ChEBI" id="CHEBI:59789"/>
        <dbReference type="ChEBI" id="CHEBI:65315"/>
        <dbReference type="ChEBI" id="CHEBI:82930"/>
        <dbReference type="EC" id="2.5.1.25"/>
    </reaction>
</comment>
<comment type="subcellular location">
    <subcellularLocation>
        <location evidence="1">Nucleus</location>
    </subcellularLocation>
</comment>
<comment type="similarity">
    <text evidence="3">Belongs to the TDD superfamily. DTWD1 family.</text>
</comment>
<keyword id="KW-0539">Nucleus</keyword>
<keyword id="KW-1185">Reference proteome</keyword>
<keyword id="KW-0949">S-adenosyl-L-methionine</keyword>
<keyword id="KW-0808">Transferase</keyword>
<keyword id="KW-0819">tRNA processing</keyword>